<accession>Q07WI2</accession>
<comment type="function">
    <text evidence="1">Catalyzes the initial step of the lipid cycle reactions in the biosynthesis of the cell wall peptidoglycan: transfers peptidoglycan precursor phospho-MurNAc-pentapeptide from UDP-MurNAc-pentapeptide onto the lipid carrier undecaprenyl phosphate, yielding undecaprenyl-pyrophosphoryl-MurNAc-pentapeptide, known as lipid I.</text>
</comment>
<comment type="catalytic activity">
    <reaction evidence="1">
        <text>UDP-N-acetyl-alpha-D-muramoyl-L-alanyl-gamma-D-glutamyl-meso-2,6-diaminopimeloyl-D-alanyl-D-alanine + di-trans,octa-cis-undecaprenyl phosphate = di-trans,octa-cis-undecaprenyl diphospho-N-acetyl-alpha-D-muramoyl-L-alanyl-D-glutamyl-meso-2,6-diaminopimeloyl-D-alanyl-D-alanine + UMP</text>
        <dbReference type="Rhea" id="RHEA:28386"/>
        <dbReference type="ChEBI" id="CHEBI:57865"/>
        <dbReference type="ChEBI" id="CHEBI:60392"/>
        <dbReference type="ChEBI" id="CHEBI:61386"/>
        <dbReference type="ChEBI" id="CHEBI:61387"/>
        <dbReference type="EC" id="2.7.8.13"/>
    </reaction>
</comment>
<comment type="cofactor">
    <cofactor evidence="1">
        <name>Mg(2+)</name>
        <dbReference type="ChEBI" id="CHEBI:18420"/>
    </cofactor>
</comment>
<comment type="pathway">
    <text evidence="1">Cell wall biogenesis; peptidoglycan biosynthesis.</text>
</comment>
<comment type="subcellular location">
    <subcellularLocation>
        <location evidence="1">Cell inner membrane</location>
        <topology evidence="1">Multi-pass membrane protein</topology>
    </subcellularLocation>
</comment>
<comment type="similarity">
    <text evidence="1">Belongs to the glycosyltransferase 4 family. MraY subfamily.</text>
</comment>
<reference key="1">
    <citation type="submission" date="2006-08" db="EMBL/GenBank/DDBJ databases">
        <title>Complete sequence of Shewanella frigidimarina NCIMB 400.</title>
        <authorList>
            <consortium name="US DOE Joint Genome Institute"/>
            <person name="Copeland A."/>
            <person name="Lucas S."/>
            <person name="Lapidus A."/>
            <person name="Barry K."/>
            <person name="Detter J.C."/>
            <person name="Glavina del Rio T."/>
            <person name="Hammon N."/>
            <person name="Israni S."/>
            <person name="Dalin E."/>
            <person name="Tice H."/>
            <person name="Pitluck S."/>
            <person name="Fredrickson J.K."/>
            <person name="Kolker E."/>
            <person name="McCuel L.A."/>
            <person name="DiChristina T."/>
            <person name="Nealson K.H."/>
            <person name="Newman D."/>
            <person name="Tiedje J.M."/>
            <person name="Zhou J."/>
            <person name="Romine M.F."/>
            <person name="Culley D.E."/>
            <person name="Serres M."/>
            <person name="Chertkov O."/>
            <person name="Brettin T."/>
            <person name="Bruce D."/>
            <person name="Han C."/>
            <person name="Tapia R."/>
            <person name="Gilna P."/>
            <person name="Schmutz J."/>
            <person name="Larimer F."/>
            <person name="Land M."/>
            <person name="Hauser L."/>
            <person name="Kyrpides N."/>
            <person name="Mikhailova N."/>
            <person name="Richardson P."/>
        </authorList>
    </citation>
    <scope>NUCLEOTIDE SEQUENCE [LARGE SCALE GENOMIC DNA]</scope>
    <source>
        <strain>NCIMB 400</strain>
    </source>
</reference>
<gene>
    <name evidence="1" type="primary">mraY</name>
    <name type="ordered locus">Sfri_3807</name>
</gene>
<keyword id="KW-0131">Cell cycle</keyword>
<keyword id="KW-0132">Cell division</keyword>
<keyword id="KW-0997">Cell inner membrane</keyword>
<keyword id="KW-1003">Cell membrane</keyword>
<keyword id="KW-0133">Cell shape</keyword>
<keyword id="KW-0961">Cell wall biogenesis/degradation</keyword>
<keyword id="KW-0460">Magnesium</keyword>
<keyword id="KW-0472">Membrane</keyword>
<keyword id="KW-0479">Metal-binding</keyword>
<keyword id="KW-0573">Peptidoglycan synthesis</keyword>
<keyword id="KW-1185">Reference proteome</keyword>
<keyword id="KW-0808">Transferase</keyword>
<keyword id="KW-0812">Transmembrane</keyword>
<keyword id="KW-1133">Transmembrane helix</keyword>
<evidence type="ECO:0000255" key="1">
    <source>
        <dbReference type="HAMAP-Rule" id="MF_00038"/>
    </source>
</evidence>
<dbReference type="EC" id="2.7.8.13" evidence="1"/>
<dbReference type="EMBL" id="CP000447">
    <property type="protein sequence ID" value="ABI73632.1"/>
    <property type="molecule type" value="Genomic_DNA"/>
</dbReference>
<dbReference type="RefSeq" id="WP_011639217.1">
    <property type="nucleotide sequence ID" value="NC_008345.1"/>
</dbReference>
<dbReference type="SMR" id="Q07WI2"/>
<dbReference type="STRING" id="318167.Sfri_3807"/>
<dbReference type="KEGG" id="sfr:Sfri_3807"/>
<dbReference type="eggNOG" id="COG0472">
    <property type="taxonomic scope" value="Bacteria"/>
</dbReference>
<dbReference type="HOGENOM" id="CLU_023982_0_0_6"/>
<dbReference type="OrthoDB" id="9805475at2"/>
<dbReference type="UniPathway" id="UPA00219"/>
<dbReference type="Proteomes" id="UP000000684">
    <property type="component" value="Chromosome"/>
</dbReference>
<dbReference type="GO" id="GO:0005886">
    <property type="term" value="C:plasma membrane"/>
    <property type="evidence" value="ECO:0007669"/>
    <property type="project" value="UniProtKB-SubCell"/>
</dbReference>
<dbReference type="GO" id="GO:0046872">
    <property type="term" value="F:metal ion binding"/>
    <property type="evidence" value="ECO:0007669"/>
    <property type="project" value="UniProtKB-KW"/>
</dbReference>
<dbReference type="GO" id="GO:0008963">
    <property type="term" value="F:phospho-N-acetylmuramoyl-pentapeptide-transferase activity"/>
    <property type="evidence" value="ECO:0007669"/>
    <property type="project" value="UniProtKB-UniRule"/>
</dbReference>
<dbReference type="GO" id="GO:0051992">
    <property type="term" value="F:UDP-N-acetylmuramoyl-L-alanyl-D-glutamyl-meso-2,6-diaminopimelyl-D-alanyl-D-alanine:undecaprenyl-phosphate transferase activity"/>
    <property type="evidence" value="ECO:0007669"/>
    <property type="project" value="RHEA"/>
</dbReference>
<dbReference type="GO" id="GO:0051301">
    <property type="term" value="P:cell division"/>
    <property type="evidence" value="ECO:0007669"/>
    <property type="project" value="UniProtKB-KW"/>
</dbReference>
<dbReference type="GO" id="GO:0071555">
    <property type="term" value="P:cell wall organization"/>
    <property type="evidence" value="ECO:0007669"/>
    <property type="project" value="UniProtKB-KW"/>
</dbReference>
<dbReference type="GO" id="GO:0009252">
    <property type="term" value="P:peptidoglycan biosynthetic process"/>
    <property type="evidence" value="ECO:0007669"/>
    <property type="project" value="UniProtKB-UniRule"/>
</dbReference>
<dbReference type="GO" id="GO:0008360">
    <property type="term" value="P:regulation of cell shape"/>
    <property type="evidence" value="ECO:0007669"/>
    <property type="project" value="UniProtKB-KW"/>
</dbReference>
<dbReference type="CDD" id="cd06852">
    <property type="entry name" value="GT_MraY"/>
    <property type="match status" value="1"/>
</dbReference>
<dbReference type="HAMAP" id="MF_00038">
    <property type="entry name" value="MraY"/>
    <property type="match status" value="1"/>
</dbReference>
<dbReference type="InterPro" id="IPR000715">
    <property type="entry name" value="Glycosyl_transferase_4"/>
</dbReference>
<dbReference type="InterPro" id="IPR003524">
    <property type="entry name" value="PNAcMuramoyl-5peptid_Trfase"/>
</dbReference>
<dbReference type="InterPro" id="IPR018480">
    <property type="entry name" value="PNAcMuramoyl-5peptid_Trfase_CS"/>
</dbReference>
<dbReference type="NCBIfam" id="TIGR00445">
    <property type="entry name" value="mraY"/>
    <property type="match status" value="1"/>
</dbReference>
<dbReference type="PANTHER" id="PTHR22926">
    <property type="entry name" value="PHOSPHO-N-ACETYLMURAMOYL-PENTAPEPTIDE-TRANSFERASE"/>
    <property type="match status" value="1"/>
</dbReference>
<dbReference type="PANTHER" id="PTHR22926:SF5">
    <property type="entry name" value="PHOSPHO-N-ACETYLMURAMOYL-PENTAPEPTIDE-TRANSFERASE HOMOLOG"/>
    <property type="match status" value="1"/>
</dbReference>
<dbReference type="Pfam" id="PF00953">
    <property type="entry name" value="Glycos_transf_4"/>
    <property type="match status" value="1"/>
</dbReference>
<dbReference type="Pfam" id="PF10555">
    <property type="entry name" value="MraY_sig1"/>
    <property type="match status" value="1"/>
</dbReference>
<dbReference type="PROSITE" id="PS01347">
    <property type="entry name" value="MRAY_1"/>
    <property type="match status" value="1"/>
</dbReference>
<dbReference type="PROSITE" id="PS01348">
    <property type="entry name" value="MRAY_2"/>
    <property type="match status" value="1"/>
</dbReference>
<sequence>MLVYLAEYLTQFYSGFNVFSYVTFRAILGLLTALVFSLWWGPILIKHLQTLQIGQVVRDDGPESHFSKRGTPTMGGILILAGIFISVLLWGDLSNRYVLVTLFVLASFGVIGFIDDYRKVVKKDSKGLIARWKYALQSIAALVVAVYLYSSSTMVGETQLVVPFFKDIMPQLGFMFILLAYFTIVGASNAVNLTDGLDGLAIMPTVMVAAAFALIAYLSGHAQFASYLHLPHLPLAGELVIVCTAMVGAGLGFLWFNTYPAQVFMGDVGSLALGAALGVIAILVRQEILLVIMGGVFVMETVSVILQVGSYKLRGQRIFRMAPIHHHYELKGWPEPRVIVRFWIISLFLVLLGLATLKLR</sequence>
<protein>
    <recommendedName>
        <fullName evidence="1">Phospho-N-acetylmuramoyl-pentapeptide-transferase</fullName>
        <ecNumber evidence="1">2.7.8.13</ecNumber>
    </recommendedName>
    <alternativeName>
        <fullName evidence="1">UDP-MurNAc-pentapeptide phosphotransferase</fullName>
    </alternativeName>
</protein>
<proteinExistence type="inferred from homology"/>
<name>MRAY_SHEFN</name>
<feature type="chain" id="PRO_1000003058" description="Phospho-N-acetylmuramoyl-pentapeptide-transferase">
    <location>
        <begin position="1"/>
        <end position="360"/>
    </location>
</feature>
<feature type="transmembrane region" description="Helical" evidence="1">
    <location>
        <begin position="26"/>
        <end position="46"/>
    </location>
</feature>
<feature type="transmembrane region" description="Helical" evidence="1">
    <location>
        <begin position="73"/>
        <end position="93"/>
    </location>
</feature>
<feature type="transmembrane region" description="Helical" evidence="1">
    <location>
        <begin position="97"/>
        <end position="117"/>
    </location>
</feature>
<feature type="transmembrane region" description="Helical" evidence="1">
    <location>
        <begin position="135"/>
        <end position="155"/>
    </location>
</feature>
<feature type="transmembrane region" description="Helical" evidence="1">
    <location>
        <begin position="168"/>
        <end position="188"/>
    </location>
</feature>
<feature type="transmembrane region" description="Helical" evidence="1">
    <location>
        <begin position="199"/>
        <end position="219"/>
    </location>
</feature>
<feature type="transmembrane region" description="Helical" evidence="1">
    <location>
        <begin position="236"/>
        <end position="256"/>
    </location>
</feature>
<feature type="transmembrane region" description="Helical" evidence="1">
    <location>
        <begin position="263"/>
        <end position="283"/>
    </location>
</feature>
<feature type="transmembrane region" description="Helical" evidence="1">
    <location>
        <begin position="288"/>
        <end position="308"/>
    </location>
</feature>
<feature type="transmembrane region" description="Helical" evidence="1">
    <location>
        <begin position="338"/>
        <end position="358"/>
    </location>
</feature>
<organism>
    <name type="scientific">Shewanella frigidimarina (strain NCIMB 400)</name>
    <dbReference type="NCBI Taxonomy" id="318167"/>
    <lineage>
        <taxon>Bacteria</taxon>
        <taxon>Pseudomonadati</taxon>
        <taxon>Pseudomonadota</taxon>
        <taxon>Gammaproteobacteria</taxon>
        <taxon>Alteromonadales</taxon>
        <taxon>Shewanellaceae</taxon>
        <taxon>Shewanella</taxon>
    </lineage>
</organism>